<organism>
    <name type="scientific">Macaca fascicularis</name>
    <name type="common">Crab-eating macaque</name>
    <name type="synonym">Cynomolgus monkey</name>
    <dbReference type="NCBI Taxonomy" id="9541"/>
    <lineage>
        <taxon>Eukaryota</taxon>
        <taxon>Metazoa</taxon>
        <taxon>Chordata</taxon>
        <taxon>Craniata</taxon>
        <taxon>Vertebrata</taxon>
        <taxon>Euteleostomi</taxon>
        <taxon>Mammalia</taxon>
        <taxon>Eutheria</taxon>
        <taxon>Euarchontoglires</taxon>
        <taxon>Primates</taxon>
        <taxon>Haplorrhini</taxon>
        <taxon>Catarrhini</taxon>
        <taxon>Cercopithecidae</taxon>
        <taxon>Cercopithecinae</taxon>
        <taxon>Macaca</taxon>
    </lineage>
</organism>
<name>UCK1_MACFA</name>
<accession>Q4R4K2</accession>
<comment type="function">
    <text evidence="2">Phosphorylates uridine and cytidine to uridine monophosphate and cytidine monophosphate. Does not phosphorylate deoxyribonucleosides or purine ribonucleosides. Can use ATP or GTP as a phosphate donor.</text>
</comment>
<comment type="catalytic activity">
    <reaction evidence="2">
        <text>uridine + ATP = UMP + ADP + H(+)</text>
        <dbReference type="Rhea" id="RHEA:16825"/>
        <dbReference type="ChEBI" id="CHEBI:15378"/>
        <dbReference type="ChEBI" id="CHEBI:16704"/>
        <dbReference type="ChEBI" id="CHEBI:30616"/>
        <dbReference type="ChEBI" id="CHEBI:57865"/>
        <dbReference type="ChEBI" id="CHEBI:456216"/>
        <dbReference type="EC" id="2.7.1.48"/>
    </reaction>
</comment>
<comment type="catalytic activity">
    <reaction evidence="2">
        <text>cytidine + ATP = CMP + ADP + H(+)</text>
        <dbReference type="Rhea" id="RHEA:24674"/>
        <dbReference type="ChEBI" id="CHEBI:15378"/>
        <dbReference type="ChEBI" id="CHEBI:17562"/>
        <dbReference type="ChEBI" id="CHEBI:30616"/>
        <dbReference type="ChEBI" id="CHEBI:60377"/>
        <dbReference type="ChEBI" id="CHEBI:456216"/>
        <dbReference type="EC" id="2.7.1.48"/>
    </reaction>
</comment>
<comment type="pathway">
    <text evidence="2">Pyrimidine metabolism; CTP biosynthesis via salvage pathway; CTP from cytidine: step 1/3.</text>
</comment>
<comment type="pathway">
    <text evidence="2">Pyrimidine metabolism; UMP biosynthesis via salvage pathway; UMP from uridine: step 1/1.</text>
</comment>
<comment type="similarity">
    <text evidence="4">Belongs to the uridine kinase family.</text>
</comment>
<gene>
    <name type="primary">UCK1</name>
    <name type="ORF">QnpA-18547</name>
</gene>
<feature type="chain" id="PRO_0000346100" description="Uridine-cytidine kinase 1">
    <location>
        <begin position="1"/>
        <end position="254"/>
    </location>
</feature>
<feature type="region of interest" description="Disordered" evidence="3">
    <location>
        <begin position="1"/>
        <end position="29"/>
    </location>
</feature>
<feature type="region of interest" description="Disordered" evidence="3">
    <location>
        <begin position="224"/>
        <end position="254"/>
    </location>
</feature>
<feature type="compositionally biased region" description="Basic and acidic residues" evidence="3">
    <location>
        <begin position="245"/>
        <end position="254"/>
    </location>
</feature>
<feature type="binding site" evidence="2">
    <location>
        <begin position="30"/>
        <end position="38"/>
    </location>
    <ligand>
        <name>ATP</name>
        <dbReference type="ChEBI" id="CHEBI:30616"/>
    </ligand>
</feature>
<feature type="binding site" evidence="1">
    <location>
        <position position="87"/>
    </location>
    <ligand>
        <name>substrate</name>
    </ligand>
</feature>
<feature type="binding site" evidence="1">
    <location>
        <position position="115"/>
    </location>
    <ligand>
        <name>substrate</name>
    </ligand>
</feature>
<feature type="binding site" evidence="1">
    <location>
        <position position="120"/>
    </location>
    <ligand>
        <name>substrate</name>
    </ligand>
</feature>
<feature type="binding site" evidence="1">
    <location>
        <position position="146"/>
    </location>
    <ligand>
        <name>substrate</name>
    </ligand>
</feature>
<feature type="binding site" evidence="1">
    <location>
        <position position="155"/>
    </location>
    <ligand>
        <name>substrate</name>
    </ligand>
</feature>
<feature type="binding site" evidence="1">
    <location>
        <position position="163"/>
    </location>
    <ligand>
        <name>substrate</name>
    </ligand>
</feature>
<feature type="binding site" evidence="2">
    <location>
        <position position="192"/>
    </location>
    <ligand>
        <name>ATP</name>
        <dbReference type="ChEBI" id="CHEBI:30616"/>
    </ligand>
</feature>
<feature type="modified residue" description="Phosphothreonine" evidence="2">
    <location>
        <position position="228"/>
    </location>
</feature>
<feature type="modified residue" description="Phosphoserine" evidence="2">
    <location>
        <position position="230"/>
    </location>
</feature>
<proteinExistence type="evidence at transcript level"/>
<keyword id="KW-0067">ATP-binding</keyword>
<keyword id="KW-0418">Kinase</keyword>
<keyword id="KW-0547">Nucleotide-binding</keyword>
<keyword id="KW-0597">Phosphoprotein</keyword>
<keyword id="KW-1185">Reference proteome</keyword>
<keyword id="KW-0808">Transferase</keyword>
<sequence length="254" mass="28683">MASAGGDECEGAAPEADRPHQRPFLIGVSGGTASGKSTVCEKIMGLLGQNEVEQRQRKVVILSQDRFYKVLTAEQKAKALKGQYNFDHPDAFDNDLMHRTLKNIVEGKTVEVPTYDFVTHSSQEIRDMFHLRLFVDTDSDVRLSRRVLRDVRRGRDLEQILTQYTTFVKPAFEEFCLPTKKYADVIIPRGVDNMVAINLIVQHIQDILNGDICKWHRGGSNGRSYKRTFSEPGDHPGMLTSGKRSHLESSSRPH</sequence>
<protein>
    <recommendedName>
        <fullName>Uridine-cytidine kinase 1</fullName>
        <shortName>UCK 1</shortName>
        <ecNumber evidence="2">2.7.1.48</ecNumber>
    </recommendedName>
    <alternativeName>
        <fullName>Cytidine monophosphokinase 1</fullName>
    </alternativeName>
    <alternativeName>
        <fullName>Uridine monophosphokinase 1</fullName>
    </alternativeName>
</protein>
<dbReference type="EC" id="2.7.1.48" evidence="2"/>
<dbReference type="EMBL" id="AB169892">
    <property type="protein sequence ID" value="BAE01973.1"/>
    <property type="molecule type" value="mRNA"/>
</dbReference>
<dbReference type="SMR" id="Q4R4K2"/>
<dbReference type="STRING" id="9541.ENSMFAP00000010179"/>
<dbReference type="UniPathway" id="UPA00574">
    <property type="reaction ID" value="UER00637"/>
</dbReference>
<dbReference type="UniPathway" id="UPA00579">
    <property type="reaction ID" value="UER00640"/>
</dbReference>
<dbReference type="Proteomes" id="UP000233100">
    <property type="component" value="Unplaced"/>
</dbReference>
<dbReference type="GO" id="GO:0005524">
    <property type="term" value="F:ATP binding"/>
    <property type="evidence" value="ECO:0007669"/>
    <property type="project" value="UniProtKB-KW"/>
</dbReference>
<dbReference type="GO" id="GO:0043771">
    <property type="term" value="F:cytidine kinase activity"/>
    <property type="evidence" value="ECO:0000250"/>
    <property type="project" value="UniProtKB"/>
</dbReference>
<dbReference type="GO" id="GO:0004849">
    <property type="term" value="F:uridine kinase activity"/>
    <property type="evidence" value="ECO:0000250"/>
    <property type="project" value="UniProtKB"/>
</dbReference>
<dbReference type="GO" id="GO:0044211">
    <property type="term" value="P:CTP salvage"/>
    <property type="evidence" value="ECO:0000250"/>
    <property type="project" value="UniProtKB"/>
</dbReference>
<dbReference type="GO" id="GO:0044206">
    <property type="term" value="P:UMP salvage"/>
    <property type="evidence" value="ECO:0000250"/>
    <property type="project" value="UniProtKB"/>
</dbReference>
<dbReference type="CDD" id="cd02023">
    <property type="entry name" value="UMPK"/>
    <property type="match status" value="1"/>
</dbReference>
<dbReference type="FunFam" id="3.40.50.300:FF:006106">
    <property type="entry name" value="Uridine-cytidine kinase 1"/>
    <property type="match status" value="1"/>
</dbReference>
<dbReference type="Gene3D" id="3.40.50.300">
    <property type="entry name" value="P-loop containing nucleotide triphosphate hydrolases"/>
    <property type="match status" value="2"/>
</dbReference>
<dbReference type="InterPro" id="IPR027417">
    <property type="entry name" value="P-loop_NTPase"/>
</dbReference>
<dbReference type="InterPro" id="IPR006083">
    <property type="entry name" value="PRK/URK"/>
</dbReference>
<dbReference type="InterPro" id="IPR000764">
    <property type="entry name" value="Uridine_kinase-like"/>
</dbReference>
<dbReference type="PANTHER" id="PTHR10285">
    <property type="entry name" value="URIDINE KINASE"/>
    <property type="match status" value="1"/>
</dbReference>
<dbReference type="Pfam" id="PF00485">
    <property type="entry name" value="PRK"/>
    <property type="match status" value="2"/>
</dbReference>
<dbReference type="PRINTS" id="PR00988">
    <property type="entry name" value="URIDINKINASE"/>
</dbReference>
<dbReference type="SUPFAM" id="SSF52540">
    <property type="entry name" value="P-loop containing nucleoside triphosphate hydrolases"/>
    <property type="match status" value="1"/>
</dbReference>
<evidence type="ECO:0000250" key="1">
    <source>
        <dbReference type="UniProtKB" id="Q9BZX2"/>
    </source>
</evidence>
<evidence type="ECO:0000250" key="2">
    <source>
        <dbReference type="UniProtKB" id="Q9HA47"/>
    </source>
</evidence>
<evidence type="ECO:0000256" key="3">
    <source>
        <dbReference type="SAM" id="MobiDB-lite"/>
    </source>
</evidence>
<evidence type="ECO:0000305" key="4"/>
<reference key="1">
    <citation type="submission" date="2005-06" db="EMBL/GenBank/DDBJ databases">
        <title>DNA sequences of macaque genes expressed in brain or testis and its evolutionary implications.</title>
        <authorList>
            <consortium name="International consortium for macaque cDNA sequencing and analysis"/>
        </authorList>
    </citation>
    <scope>NUCLEOTIDE SEQUENCE [LARGE SCALE MRNA]</scope>
    <source>
        <tissue>Parietal cortex</tissue>
    </source>
</reference>